<organism>
    <name type="scientific">Rattus norvegicus</name>
    <name type="common">Rat</name>
    <dbReference type="NCBI Taxonomy" id="10116"/>
    <lineage>
        <taxon>Eukaryota</taxon>
        <taxon>Metazoa</taxon>
        <taxon>Chordata</taxon>
        <taxon>Craniata</taxon>
        <taxon>Vertebrata</taxon>
        <taxon>Euteleostomi</taxon>
        <taxon>Mammalia</taxon>
        <taxon>Eutheria</taxon>
        <taxon>Euarchontoglires</taxon>
        <taxon>Glires</taxon>
        <taxon>Rodentia</taxon>
        <taxon>Myomorpha</taxon>
        <taxon>Muroidea</taxon>
        <taxon>Muridae</taxon>
        <taxon>Murinae</taxon>
        <taxon>Rattus</taxon>
    </lineage>
</organism>
<keyword id="KW-0106">Calcium</keyword>
<keyword id="KW-0966">Cell projection</keyword>
<keyword id="KW-0969">Cilium</keyword>
<keyword id="KW-0175">Coiled coil</keyword>
<keyword id="KW-0968">Cytoplasmic vesicle</keyword>
<keyword id="KW-1015">Disulfide bond</keyword>
<keyword id="KW-0256">Endoplasmic reticulum</keyword>
<keyword id="KW-0272">Extracellular matrix</keyword>
<keyword id="KW-0325">Glycoprotein</keyword>
<keyword id="KW-0333">Golgi apparatus</keyword>
<keyword id="KW-0449">Lipoprotein</keyword>
<keyword id="KW-0472">Membrane</keyword>
<keyword id="KW-0479">Metal-binding</keyword>
<keyword id="KW-0496">Mitochondrion</keyword>
<keyword id="KW-0999">Mitochondrion inner membrane</keyword>
<keyword id="KW-1000">Mitochondrion outer membrane</keyword>
<keyword id="KW-0564">Palmitate</keyword>
<keyword id="KW-1185">Reference proteome</keyword>
<keyword id="KW-0964">Secreted</keyword>
<keyword id="KW-0732">Signal</keyword>
<comment type="function">
    <text evidence="2 4">Secreted glycoprotein regulating the activation of different signaling pathways in adjacent cells to control different processes including cell adhesion, cell-matrix adhesion, cytoskeleton organization and cell migration. Promotes substrate adhesion, spreading and formation of focal contacts. Negatively regulates cell-matrix adhesion and stress fiber assembly through Rho protein signal transduction. Modulates the organization of actin cytoskeleton by stimulating the formation of stress fibers through interactions with components of Wnt signaling pathways. Promotes cell migration through activation of PTK2 and the downstream phosphatidylinositol 3-kinase signaling. Plays a role in bone formation and promotes osteoblast differentiation in a dose-dependent manner through mitogen-activated protein kinase signaling. Mediates myelination in the peripheral nervous system through ERBB2/ERBB3 signaling. Plays a role as a regulator of muscle hypertrophy through the components of dystrophin-associated protein complex. Involved in positive regulation of mitochondrial depolarization. Plays a role in neurite outgrowth. May participate in the obstruction of fluid outflow in the trabecular meshwork.</text>
</comment>
<comment type="subunit">
    <text evidence="2 4">Homodimer (via N-terminus). Can also form higher oligomers. Interacts with OLFM3, FN1, NRCAM, GLDN and NFASC. Interacts (via N-terminus) with MYL2. Interacts with SFRP1, FRZB, FZD7, FZD10, FZD1 and WIF1; regulates Wnt signaling (By similarity). Interacts with SNTA1; regulates muscle hypertrophy. Interacts with ERBB2 and ERBB3; activates ERBB2-ERBB3 signaling pathway. Interacts with SNCG; affects its secretion and its aggregation (By similarity).</text>
</comment>
<comment type="subcellular location">
    <subcellularLocation>
        <location evidence="4">Secreted</location>
    </subcellularLocation>
    <subcellularLocation>
        <location evidence="4">Golgi apparatus</location>
    </subcellularLocation>
    <subcellularLocation>
        <location evidence="4">Cytoplasmic vesicle</location>
    </subcellularLocation>
    <subcellularLocation>
        <location evidence="4">Secreted</location>
        <location evidence="4">Extracellular space</location>
    </subcellularLocation>
    <subcellularLocation>
        <location evidence="4">Secreted</location>
        <location evidence="4">Extracellular space</location>
        <location evidence="4">Extracellular matrix</location>
    </subcellularLocation>
    <subcellularLocation>
        <location evidence="4">Secreted</location>
        <location evidence="4">Extracellular exosome</location>
    </subcellularLocation>
    <subcellularLocation>
        <location evidence="4">Mitochondrion</location>
    </subcellularLocation>
    <subcellularLocation>
        <location evidence="4">Mitochondrion intermembrane space</location>
    </subcellularLocation>
    <subcellularLocation>
        <location evidence="4">Mitochondrion inner membrane</location>
    </subcellularLocation>
    <subcellularLocation>
        <location evidence="4">Mitochondrion outer membrane</location>
    </subcellularLocation>
    <subcellularLocation>
        <location evidence="4">Rough endoplasmic reticulum</location>
    </subcellularLocation>
    <subcellularLocation>
        <location evidence="4">Cell projection</location>
    </subcellularLocation>
    <subcellularLocation>
        <location evidence="4">Cell projection</location>
        <location evidence="4">Cilium</location>
    </subcellularLocation>
    <text evidence="4">Located preferentially in the ciliary rootlet and basal body of the connecting cilium of photoreceptor cells, and in the rough endoplasmic reticulum. It is only imported to mitochondria in the trabecular meshwork. Localizes to the Golgi apparatus in Schlemm's canal endothelial cells. Appears in the extracellular space of trabecular meshwork cells by an unconventional mechanism, likely associated with exosome-like vesicles. Localizes in trabecular meshwork extracellular matrix.</text>
</comment>
<comment type="subcellular location">
    <molecule>Myocilin, C-terminal fragment</molecule>
    <subcellularLocation>
        <location evidence="1">Secreted</location>
    </subcellularLocation>
</comment>
<comment type="subcellular location">
    <molecule>Myocilin, N-terminal fragment</molecule>
    <subcellularLocation>
        <location>Endoplasmic reticulum</location>
    </subcellularLocation>
    <text evidence="1">Remains retained in the endoplasmic reticulum.</text>
</comment>
<comment type="tissue specificity">
    <text evidence="8">Highly expressed in skeletal muscle and retina. Also detected at lower levels in thyroid gland but not in other endocrine glands such as the adrenal or pituitary glands.</text>
</comment>
<comment type="induction">
    <text evidence="9">Up-regulated by dexamethasone.</text>
</comment>
<comment type="PTM">
    <text evidence="3">Palmitoylated.</text>
</comment>
<comment type="PTM">
    <text evidence="1">Undergoes a calcium-dependent proteolytic cleavage at Gln-225 by CAPN2 in the endoplasmic reticulum. The result is the production of two fragments, one of 35 kDa containing the C-terminal olfactomedin-like domain, and another of 20 kDa containing the N-terminal leucine zipper-like domain (By similarity).</text>
</comment>
<comment type="PTM">
    <text evidence="4">Glycosylated.</text>
</comment>
<protein>
    <recommendedName>
        <fullName>Myocilin</fullName>
    </recommendedName>
    <alternativeName>
        <fullName>Trabecular meshwork-induced glucocorticoid response protein</fullName>
    </alternativeName>
    <component>
        <recommendedName>
            <fullName>Myocilin, N-terminal fragment</fullName>
        </recommendedName>
        <alternativeName>
            <fullName>Myocilin 20 kDa N-terminal fragment</fullName>
        </alternativeName>
    </component>
    <component>
        <recommendedName>
            <fullName>Myocilin, C-terminal fragment</fullName>
        </recommendedName>
        <alternativeName>
            <fullName>Myocilin 35 kDa N-terminal fragment</fullName>
        </alternativeName>
    </component>
</protein>
<feature type="signal peptide" evidence="1">
    <location>
        <begin position="1"/>
        <end position="31"/>
    </location>
</feature>
<feature type="chain" id="PRO_0000020088" description="Myocilin">
    <location>
        <begin position="32"/>
        <end position="502"/>
    </location>
</feature>
<feature type="chain" id="PRO_0000428747" description="Myocilin, N-terminal fragment" evidence="1">
    <location>
        <begin position="32"/>
        <end position="225"/>
    </location>
</feature>
<feature type="chain" id="PRO_0000428748" description="Myocilin, C-terminal fragment" evidence="1">
    <location>
        <begin position="226"/>
        <end position="502"/>
    </location>
</feature>
<feature type="domain" description="Olfactomedin-like" evidence="6">
    <location>
        <begin position="242"/>
        <end position="501"/>
    </location>
</feature>
<feature type="region of interest" description="Disordered" evidence="7">
    <location>
        <begin position="166"/>
        <end position="198"/>
    </location>
</feature>
<feature type="coiled-coil region" evidence="5">
    <location>
        <begin position="82"/>
        <end position="183"/>
    </location>
</feature>
<feature type="binding site" evidence="4">
    <location>
        <position position="378"/>
    </location>
    <ligand>
        <name>Ca(2+)</name>
        <dbReference type="ChEBI" id="CHEBI:29108"/>
    </ligand>
</feature>
<feature type="binding site" evidence="4">
    <location>
        <position position="426"/>
    </location>
    <ligand>
        <name>Ca(2+)</name>
        <dbReference type="ChEBI" id="CHEBI:29108"/>
    </ligand>
</feature>
<feature type="binding site" evidence="4">
    <location>
        <position position="427"/>
    </location>
    <ligand>
        <name>Ca(2+)</name>
        <dbReference type="ChEBI" id="CHEBI:29108"/>
    </ligand>
</feature>
<feature type="binding site" evidence="4">
    <location>
        <position position="475"/>
    </location>
    <ligand>
        <name>Ca(2+)</name>
        <dbReference type="ChEBI" id="CHEBI:29108"/>
    </ligand>
</feature>
<feature type="binding site" evidence="4">
    <location>
        <position position="476"/>
    </location>
    <ligand>
        <name>Ca(2+)</name>
        <dbReference type="ChEBI" id="CHEBI:29108"/>
    </ligand>
</feature>
<feature type="site" description="Cleavage; by CAPN2" evidence="1">
    <location>
        <begin position="225"/>
        <end position="226"/>
    </location>
</feature>
<feature type="glycosylation site" description="N-linked (GlcNAc...) asparagine" evidence="5">
    <location>
        <position position="229"/>
    </location>
</feature>
<feature type="disulfide bond" evidence="4 6">
    <location>
        <begin position="243"/>
        <end position="431"/>
    </location>
</feature>
<feature type="sequence conflict" description="In Ref. 1; BAA34199." evidence="10" ref="1">
    <original>Y</original>
    <variation>R</variation>
    <location>
        <position position="6"/>
    </location>
</feature>
<feature type="sequence conflict" description="In Ref. 1; BAA34199." evidence="10" ref="1">
    <original>S</original>
    <variation>A</variation>
    <location>
        <position position="329"/>
    </location>
</feature>
<reference key="1">
    <citation type="journal article" date="2000" name="Mol. Genet. Metab.">
        <title>Molecular cloning and expression profile of rat myocilin.</title>
        <authorList>
            <person name="Taguchi M."/>
            <person name="Kanno H."/>
            <person name="Kubota R."/>
            <person name="Miwa S."/>
            <person name="Shishiba Y."/>
            <person name="Ozawa Y."/>
        </authorList>
    </citation>
    <scope>NUCLEOTIDE SEQUENCE [MRNA]</scope>
    <scope>TISSUE SPECIFICITY</scope>
    <source>
        <strain>Sprague-Dawley</strain>
        <tissue>Eye</tissue>
    </source>
</reference>
<reference key="2">
    <citation type="submission" date="1998-09" db="EMBL/GenBank/DDBJ databases">
        <title>Molecular cloning of myocilin gene from rat eye.</title>
        <authorList>
            <person name="Yaoeda K."/>
            <person name="Yamamoto T."/>
            <person name="Funaki H."/>
            <person name="Koyama Y."/>
            <person name="Nihei K."/>
            <person name="Tani T."/>
            <person name="Yaoita E."/>
            <person name="Kawasaki K."/>
            <person name="Abe H."/>
            <person name="Kihara I."/>
        </authorList>
    </citation>
    <scope>NUCLEOTIDE SEQUENCE [MRNA]</scope>
    <source>
        <strain>Wistar Kyoto</strain>
        <tissue>Eye</tissue>
    </source>
</reference>
<reference key="3">
    <citation type="journal article" date="2013" name="J. Biol. Chem.">
        <title>Myocilin stimulates osteogenic differentiation of mesenchymal stem cells through mitogen-activated protein kinase signaling.</title>
        <authorList>
            <person name="Kwon H.S."/>
            <person name="Johnson T.V."/>
            <person name="Tomarev S.I."/>
        </authorList>
    </citation>
    <scope>INDUCTION</scope>
</reference>
<name>MYOC_RAT</name>
<gene>
    <name type="primary">Myoc</name>
    <name type="synonym">Tigr</name>
</gene>
<evidence type="ECO:0000250" key="1"/>
<evidence type="ECO:0000250" key="2">
    <source>
        <dbReference type="UniProtKB" id="O70624"/>
    </source>
</evidence>
<evidence type="ECO:0000250" key="3">
    <source>
        <dbReference type="UniProtKB" id="Q2PT31"/>
    </source>
</evidence>
<evidence type="ECO:0000250" key="4">
    <source>
        <dbReference type="UniProtKB" id="Q99972"/>
    </source>
</evidence>
<evidence type="ECO:0000255" key="5"/>
<evidence type="ECO:0000255" key="6">
    <source>
        <dbReference type="PROSITE-ProRule" id="PRU00446"/>
    </source>
</evidence>
<evidence type="ECO:0000256" key="7">
    <source>
        <dbReference type="SAM" id="MobiDB-lite"/>
    </source>
</evidence>
<evidence type="ECO:0000269" key="8">
    <source>
    </source>
</evidence>
<evidence type="ECO:0000269" key="9">
    <source>
    </source>
</evidence>
<evidence type="ECO:0000305" key="10"/>
<sequence length="502" mass="56442">MPSCAYCCSCGPKMPALQLLFLACLVWGMGARTAQFRKANDRSGRCQYTFTVASPSESSCPREDQAMSAIQDLQRDSSIQHADLESTKARVRSLESLLHQMTSGGVTGTQEVQEGLQGQLGALRRERDQLETQTRDLEVAYNNLLRDKSALEEEKRQLEQENKDLARRLEGSSQEVARLRRGQCPSTHHPSQDMLPGSREVSQWNLDTLAFQELKSELTEVPASQILKNQSGHPRSKEGDKGCGVLMWVGEPVTLRTAETITGKYGVWMRDPKPTHPYTQETTWRIDTVGTGIRQVFEYSQISQFEQGYPSKVHVLPQALESTGAVVYSGSLYFQGAESRTVLRYELNTETVKAEKEIPGAGYHGQFPYAWGGYTDIDLAVDESGLWVIYSTEETRGAIVLSKLNPENLELESTWETNIRKQSVANAFVICGILYTVSSYSSVHATINFAYDTNTGISKTLTIPFKNRYKYSSMVDYNPLERKLFAWDNFNMVTYDIKLSEM</sequence>
<proteinExistence type="evidence at transcript level"/>
<dbReference type="EMBL" id="AF093567">
    <property type="protein sequence ID" value="AAD46401.1"/>
    <property type="molecule type" value="mRNA"/>
</dbReference>
<dbReference type="EMBL" id="AB019393">
    <property type="protein sequence ID" value="BAA34199.1"/>
    <property type="molecule type" value="mRNA"/>
</dbReference>
<dbReference type="RefSeq" id="NP_110492.1">
    <property type="nucleotide sequence ID" value="NM_030865.1"/>
</dbReference>
<dbReference type="SMR" id="Q9R1J4"/>
<dbReference type="BioGRID" id="249520">
    <property type="interactions" value="1"/>
</dbReference>
<dbReference type="FunCoup" id="Q9R1J4">
    <property type="interactions" value="97"/>
</dbReference>
<dbReference type="IntAct" id="Q9R1J4">
    <property type="interactions" value="1"/>
</dbReference>
<dbReference type="STRING" id="10116.ENSRNOP00000004386"/>
<dbReference type="GlyCosmos" id="Q9R1J4">
    <property type="glycosylation" value="1 site, No reported glycans"/>
</dbReference>
<dbReference type="GlyGen" id="Q9R1J4">
    <property type="glycosylation" value="2 sites"/>
</dbReference>
<dbReference type="iPTMnet" id="Q9R1J4"/>
<dbReference type="PhosphoSitePlus" id="Q9R1J4"/>
<dbReference type="PaxDb" id="10116-ENSRNOP00000004386"/>
<dbReference type="GeneID" id="81523"/>
<dbReference type="KEGG" id="rno:81523"/>
<dbReference type="UCSC" id="RGD:620430">
    <property type="organism name" value="rat"/>
</dbReference>
<dbReference type="AGR" id="RGD:620430"/>
<dbReference type="CTD" id="4653"/>
<dbReference type="RGD" id="620430">
    <property type="gene designation" value="Myoc"/>
</dbReference>
<dbReference type="eggNOG" id="KOG3545">
    <property type="taxonomic scope" value="Eukaryota"/>
</dbReference>
<dbReference type="InParanoid" id="Q9R1J4"/>
<dbReference type="PhylomeDB" id="Q9R1J4"/>
<dbReference type="PRO" id="PR:Q9R1J4"/>
<dbReference type="Proteomes" id="UP000002494">
    <property type="component" value="Unplaced"/>
</dbReference>
<dbReference type="GO" id="GO:0005929">
    <property type="term" value="C:cilium"/>
    <property type="evidence" value="ECO:0007669"/>
    <property type="project" value="UniProtKB-SubCell"/>
</dbReference>
<dbReference type="GO" id="GO:0062023">
    <property type="term" value="C:collagen-containing extracellular matrix"/>
    <property type="evidence" value="ECO:0000250"/>
    <property type="project" value="UniProtKB"/>
</dbReference>
<dbReference type="GO" id="GO:0031410">
    <property type="term" value="C:cytoplasmic vesicle"/>
    <property type="evidence" value="ECO:0000250"/>
    <property type="project" value="UniProtKB"/>
</dbReference>
<dbReference type="GO" id="GO:0005783">
    <property type="term" value="C:endoplasmic reticulum"/>
    <property type="evidence" value="ECO:0000250"/>
    <property type="project" value="UniProtKB"/>
</dbReference>
<dbReference type="GO" id="GO:0070062">
    <property type="term" value="C:extracellular exosome"/>
    <property type="evidence" value="ECO:0000250"/>
    <property type="project" value="UniProtKB"/>
</dbReference>
<dbReference type="GO" id="GO:0005615">
    <property type="term" value="C:extracellular space"/>
    <property type="evidence" value="ECO:0000266"/>
    <property type="project" value="RGD"/>
</dbReference>
<dbReference type="GO" id="GO:0005794">
    <property type="term" value="C:Golgi apparatus"/>
    <property type="evidence" value="ECO:0000250"/>
    <property type="project" value="UniProtKB"/>
</dbReference>
<dbReference type="GO" id="GO:0097453">
    <property type="term" value="C:mesaxon"/>
    <property type="evidence" value="ECO:0000314"/>
    <property type="project" value="RGD"/>
</dbReference>
<dbReference type="GO" id="GO:0005743">
    <property type="term" value="C:mitochondrial inner membrane"/>
    <property type="evidence" value="ECO:0000250"/>
    <property type="project" value="UniProtKB"/>
</dbReference>
<dbReference type="GO" id="GO:0005758">
    <property type="term" value="C:mitochondrial intermembrane space"/>
    <property type="evidence" value="ECO:0000250"/>
    <property type="project" value="UniProtKB"/>
</dbReference>
<dbReference type="GO" id="GO:0005741">
    <property type="term" value="C:mitochondrial outer membrane"/>
    <property type="evidence" value="ECO:0000250"/>
    <property type="project" value="UniProtKB"/>
</dbReference>
<dbReference type="GO" id="GO:0035748">
    <property type="term" value="C:myelin sheath abaxonal region"/>
    <property type="evidence" value="ECO:0000314"/>
    <property type="project" value="RGD"/>
</dbReference>
<dbReference type="GO" id="GO:0033268">
    <property type="term" value="C:node of Ranvier"/>
    <property type="evidence" value="ECO:0000250"/>
    <property type="project" value="UniProtKB"/>
</dbReference>
<dbReference type="GO" id="GO:0005791">
    <property type="term" value="C:rough endoplasmic reticulum"/>
    <property type="evidence" value="ECO:0007669"/>
    <property type="project" value="UniProtKB-SubCell"/>
</dbReference>
<dbReference type="GO" id="GO:0043220">
    <property type="term" value="C:Schmidt-Lanterman incisure"/>
    <property type="evidence" value="ECO:0000314"/>
    <property type="project" value="RGD"/>
</dbReference>
<dbReference type="GO" id="GO:0001968">
    <property type="term" value="F:fibronectin binding"/>
    <property type="evidence" value="ECO:0000266"/>
    <property type="project" value="RGD"/>
</dbReference>
<dbReference type="GO" id="GO:0005109">
    <property type="term" value="F:frizzled binding"/>
    <property type="evidence" value="ECO:0000266"/>
    <property type="project" value="RGD"/>
</dbReference>
<dbReference type="GO" id="GO:0046872">
    <property type="term" value="F:metal ion binding"/>
    <property type="evidence" value="ECO:0007669"/>
    <property type="project" value="UniProtKB-KW"/>
</dbReference>
<dbReference type="GO" id="GO:0032027">
    <property type="term" value="F:myosin light chain binding"/>
    <property type="evidence" value="ECO:0000266"/>
    <property type="project" value="RGD"/>
</dbReference>
<dbReference type="GO" id="GO:0030971">
    <property type="term" value="F:receptor tyrosine kinase binding"/>
    <property type="evidence" value="ECO:0000266"/>
    <property type="project" value="RGD"/>
</dbReference>
<dbReference type="GO" id="GO:0060348">
    <property type="term" value="P:bone development"/>
    <property type="evidence" value="ECO:0000250"/>
    <property type="project" value="UniProtKB"/>
</dbReference>
<dbReference type="GO" id="GO:1990090">
    <property type="term" value="P:cellular response to nerve growth factor stimulus"/>
    <property type="evidence" value="ECO:0000270"/>
    <property type="project" value="RGD"/>
</dbReference>
<dbReference type="GO" id="GO:0045162">
    <property type="term" value="P:clustering of voltage-gated sodium channels"/>
    <property type="evidence" value="ECO:0000250"/>
    <property type="project" value="UniProtKB"/>
</dbReference>
<dbReference type="GO" id="GO:0038133">
    <property type="term" value="P:ERBB2-ERBB3 signaling pathway"/>
    <property type="evidence" value="ECO:0000250"/>
    <property type="project" value="UniProtKB"/>
</dbReference>
<dbReference type="GO" id="GO:0022011">
    <property type="term" value="P:myelination in peripheral nervous system"/>
    <property type="evidence" value="ECO:0000250"/>
    <property type="project" value="UniProtKB"/>
</dbReference>
<dbReference type="GO" id="GO:0001953">
    <property type="term" value="P:negative regulation of cell-matrix adhesion"/>
    <property type="evidence" value="ECO:0000250"/>
    <property type="project" value="UniProtKB"/>
</dbReference>
<dbReference type="GO" id="GO:0035024">
    <property type="term" value="P:negative regulation of Rho protein signal transduction"/>
    <property type="evidence" value="ECO:0000250"/>
    <property type="project" value="UniProtKB"/>
</dbReference>
<dbReference type="GO" id="GO:0051497">
    <property type="term" value="P:negative regulation of stress fiber assembly"/>
    <property type="evidence" value="ECO:0000250"/>
    <property type="project" value="UniProtKB"/>
</dbReference>
<dbReference type="GO" id="GO:0021675">
    <property type="term" value="P:nerve development"/>
    <property type="evidence" value="ECO:0000270"/>
    <property type="project" value="RGD"/>
</dbReference>
<dbReference type="GO" id="GO:0031175">
    <property type="term" value="P:neuron projection development"/>
    <property type="evidence" value="ECO:0000250"/>
    <property type="project" value="UniProtKB"/>
</dbReference>
<dbReference type="GO" id="GO:0035567">
    <property type="term" value="P:non-canonical Wnt signaling pathway"/>
    <property type="evidence" value="ECO:0000250"/>
    <property type="project" value="UniProtKB"/>
</dbReference>
<dbReference type="GO" id="GO:0001649">
    <property type="term" value="P:osteoblast differentiation"/>
    <property type="evidence" value="ECO:0000250"/>
    <property type="project" value="UniProtKB"/>
</dbReference>
<dbReference type="GO" id="GO:0030335">
    <property type="term" value="P:positive regulation of cell migration"/>
    <property type="evidence" value="ECO:0000250"/>
    <property type="project" value="UniProtKB"/>
</dbReference>
<dbReference type="GO" id="GO:0051894">
    <property type="term" value="P:positive regulation of focal adhesion assembly"/>
    <property type="evidence" value="ECO:0000250"/>
    <property type="project" value="UniProtKB"/>
</dbReference>
<dbReference type="GO" id="GO:0046330">
    <property type="term" value="P:positive regulation of JNK cascade"/>
    <property type="evidence" value="ECO:0000266"/>
    <property type="project" value="RGD"/>
</dbReference>
<dbReference type="GO" id="GO:0051901">
    <property type="term" value="P:positive regulation of mitochondrial depolarization"/>
    <property type="evidence" value="ECO:0000250"/>
    <property type="project" value="UniProtKB"/>
</dbReference>
<dbReference type="GO" id="GO:0051897">
    <property type="term" value="P:positive regulation of phosphatidylinositol 3-kinase/protein kinase B signal transduction"/>
    <property type="evidence" value="ECO:0000250"/>
    <property type="project" value="UniProtKB"/>
</dbReference>
<dbReference type="GO" id="GO:0051496">
    <property type="term" value="P:positive regulation of stress fiber assembly"/>
    <property type="evidence" value="ECO:0000250"/>
    <property type="project" value="UniProtKB"/>
</dbReference>
<dbReference type="GO" id="GO:1900026">
    <property type="term" value="P:positive regulation of substrate adhesion-dependent cell spreading"/>
    <property type="evidence" value="ECO:0000250"/>
    <property type="project" value="UniProtKB"/>
</dbReference>
<dbReference type="GO" id="GO:0043408">
    <property type="term" value="P:regulation of MAPK cascade"/>
    <property type="evidence" value="ECO:0000250"/>
    <property type="project" value="UniProtKB"/>
</dbReference>
<dbReference type="GO" id="GO:0007165">
    <property type="term" value="P:signal transduction"/>
    <property type="evidence" value="ECO:0000318"/>
    <property type="project" value="GO_Central"/>
</dbReference>
<dbReference type="GO" id="GO:0014734">
    <property type="term" value="P:skeletal muscle hypertrophy"/>
    <property type="evidence" value="ECO:0000250"/>
    <property type="project" value="UniProtKB"/>
</dbReference>
<dbReference type="InterPro" id="IPR003112">
    <property type="entry name" value="Olfac-like_dom"/>
</dbReference>
<dbReference type="InterPro" id="IPR050605">
    <property type="entry name" value="Olfactomedin-like_domain"/>
</dbReference>
<dbReference type="PANTHER" id="PTHR23192:SF33">
    <property type="entry name" value="MYOCILIN"/>
    <property type="match status" value="1"/>
</dbReference>
<dbReference type="PANTHER" id="PTHR23192">
    <property type="entry name" value="OLFACTOMEDIN-RELATED"/>
    <property type="match status" value="1"/>
</dbReference>
<dbReference type="Pfam" id="PF02191">
    <property type="entry name" value="OLF"/>
    <property type="match status" value="1"/>
</dbReference>
<dbReference type="SMART" id="SM00284">
    <property type="entry name" value="OLF"/>
    <property type="match status" value="1"/>
</dbReference>
<dbReference type="PROSITE" id="PS51132">
    <property type="entry name" value="OLF"/>
    <property type="match status" value="1"/>
</dbReference>
<accession>Q9R1J4</accession>
<accession>Q9Z2Y4</accession>